<gene>
    <name type="primary">IAA1</name>
    <name type="ordered locus">At4g14560</name>
    <name type="ORF">dl3320w</name>
    <name type="ORF">FCAALL.409</name>
</gene>
<name>IAA1_ARATH</name>
<evidence type="ECO:0000255" key="1">
    <source>
        <dbReference type="PROSITE-ProRule" id="PRU01081"/>
    </source>
</evidence>
<evidence type="ECO:0000256" key="2">
    <source>
        <dbReference type="SAM" id="MobiDB-lite"/>
    </source>
</evidence>
<evidence type="ECO:0000269" key="3">
    <source>
    </source>
</evidence>
<evidence type="ECO:0000269" key="4">
    <source>
    </source>
</evidence>
<evidence type="ECO:0000269" key="5">
    <source>
    </source>
</evidence>
<evidence type="ECO:0000269" key="6">
    <source>
    </source>
</evidence>
<evidence type="ECO:0000305" key="7"/>
<dbReference type="EMBL" id="L15448">
    <property type="protein sequence ID" value="AAA16569.1"/>
    <property type="molecule type" value="mRNA"/>
</dbReference>
<dbReference type="EMBL" id="Z97336">
    <property type="protein sequence ID" value="CAB10235.1"/>
    <property type="molecule type" value="Genomic_DNA"/>
</dbReference>
<dbReference type="EMBL" id="AL161539">
    <property type="protein sequence ID" value="CAB78498.1"/>
    <property type="molecule type" value="Genomic_DNA"/>
</dbReference>
<dbReference type="EMBL" id="CP002687">
    <property type="protein sequence ID" value="AEE83460.1"/>
    <property type="molecule type" value="Genomic_DNA"/>
</dbReference>
<dbReference type="EMBL" id="AY133714">
    <property type="protein sequence ID" value="AAM91648.1"/>
    <property type="molecule type" value="mRNA"/>
</dbReference>
<dbReference type="PIR" id="A71408">
    <property type="entry name" value="A71408"/>
</dbReference>
<dbReference type="RefSeq" id="NP_193192.1">
    <property type="nucleotide sequence ID" value="NM_117536.4"/>
</dbReference>
<dbReference type="PDB" id="5C7F">
    <property type="method" value="X-ray"/>
    <property type="resolution" value="2.70 A"/>
    <property type="chains" value="E/F/G/H=10-20"/>
</dbReference>
<dbReference type="PDBsum" id="5C7F"/>
<dbReference type="SMR" id="P49677"/>
<dbReference type="BioGRID" id="12400">
    <property type="interactions" value="54"/>
</dbReference>
<dbReference type="DIP" id="DIP-34629N"/>
<dbReference type="ELM" id="P49677"/>
<dbReference type="FunCoup" id="P49677">
    <property type="interactions" value="292"/>
</dbReference>
<dbReference type="IntAct" id="P49677">
    <property type="interactions" value="47"/>
</dbReference>
<dbReference type="STRING" id="3702.P49677"/>
<dbReference type="PaxDb" id="3702-AT4G14560.1"/>
<dbReference type="ProteomicsDB" id="232220"/>
<dbReference type="DNASU" id="827103"/>
<dbReference type="EnsemblPlants" id="AT4G14560.1">
    <property type="protein sequence ID" value="AT4G14560.1"/>
    <property type="gene ID" value="AT4G14560"/>
</dbReference>
<dbReference type="GeneID" id="827103"/>
<dbReference type="Gramene" id="AT4G14560.1">
    <property type="protein sequence ID" value="AT4G14560.1"/>
    <property type="gene ID" value="AT4G14560"/>
</dbReference>
<dbReference type="KEGG" id="ath:AT4G14560"/>
<dbReference type="Araport" id="AT4G14560"/>
<dbReference type="TAIR" id="AT4G14560">
    <property type="gene designation" value="IAA1"/>
</dbReference>
<dbReference type="eggNOG" id="ENOG502QU81">
    <property type="taxonomic scope" value="Eukaryota"/>
</dbReference>
<dbReference type="HOGENOM" id="CLU_049393_0_1_1"/>
<dbReference type="InParanoid" id="P49677"/>
<dbReference type="OMA" id="NEEQDCT"/>
<dbReference type="PhylomeDB" id="P49677"/>
<dbReference type="EvolutionaryTrace" id="P49677"/>
<dbReference type="PRO" id="PR:P49677"/>
<dbReference type="Proteomes" id="UP000006548">
    <property type="component" value="Chromosome 4"/>
</dbReference>
<dbReference type="ExpressionAtlas" id="P49677">
    <property type="expression patterns" value="baseline and differential"/>
</dbReference>
<dbReference type="GO" id="GO:0005634">
    <property type="term" value="C:nucleus"/>
    <property type="evidence" value="ECO:0000314"/>
    <property type="project" value="TAIR"/>
</dbReference>
<dbReference type="GO" id="GO:0003700">
    <property type="term" value="F:DNA-binding transcription factor activity"/>
    <property type="evidence" value="ECO:0000250"/>
    <property type="project" value="TAIR"/>
</dbReference>
<dbReference type="GO" id="GO:0042802">
    <property type="term" value="F:identical protein binding"/>
    <property type="evidence" value="ECO:0000353"/>
    <property type="project" value="IntAct"/>
</dbReference>
<dbReference type="GO" id="GO:0000976">
    <property type="term" value="F:transcription cis-regulatory region binding"/>
    <property type="evidence" value="ECO:0000353"/>
    <property type="project" value="TAIR"/>
</dbReference>
<dbReference type="GO" id="GO:0009734">
    <property type="term" value="P:auxin-activated signaling pathway"/>
    <property type="evidence" value="ECO:0007669"/>
    <property type="project" value="UniProtKB-KW"/>
</dbReference>
<dbReference type="GO" id="GO:0009733">
    <property type="term" value="P:response to auxin"/>
    <property type="evidence" value="ECO:0000270"/>
    <property type="project" value="TAIR"/>
</dbReference>
<dbReference type="FunFam" id="3.10.20.90:FF:000078">
    <property type="entry name" value="Auxin-responsive protein"/>
    <property type="match status" value="1"/>
</dbReference>
<dbReference type="Gene3D" id="3.10.20.90">
    <property type="entry name" value="Phosphatidylinositol 3-kinase Catalytic Subunit, Chain A, domain 1"/>
    <property type="match status" value="1"/>
</dbReference>
<dbReference type="InterPro" id="IPR033389">
    <property type="entry name" value="AUX/IAA_dom"/>
</dbReference>
<dbReference type="InterPro" id="IPR003311">
    <property type="entry name" value="AUX_IAA"/>
</dbReference>
<dbReference type="InterPro" id="IPR053793">
    <property type="entry name" value="PB1-like"/>
</dbReference>
<dbReference type="PANTHER" id="PTHR31734:SF242">
    <property type="entry name" value="AUXIN-RESPONSIVE PROTEIN IAA1"/>
    <property type="match status" value="1"/>
</dbReference>
<dbReference type="PANTHER" id="PTHR31734">
    <property type="entry name" value="AUXIN-RESPONSIVE PROTEIN IAA17"/>
    <property type="match status" value="1"/>
</dbReference>
<dbReference type="Pfam" id="PF02309">
    <property type="entry name" value="AUX_IAA"/>
    <property type="match status" value="1"/>
</dbReference>
<dbReference type="SUPFAM" id="SSF54277">
    <property type="entry name" value="CAD &amp; PB1 domains"/>
    <property type="match status" value="1"/>
</dbReference>
<dbReference type="PROSITE" id="PS51745">
    <property type="entry name" value="PB1"/>
    <property type="match status" value="1"/>
</dbReference>
<proteinExistence type="evidence at protein level"/>
<keyword id="KW-0002">3D-structure</keyword>
<keyword id="KW-0927">Auxin signaling pathway</keyword>
<keyword id="KW-0539">Nucleus</keyword>
<keyword id="KW-0597">Phosphoprotein</keyword>
<keyword id="KW-1185">Reference proteome</keyword>
<keyword id="KW-0678">Repressor</keyword>
<keyword id="KW-0804">Transcription</keyword>
<keyword id="KW-0805">Transcription regulation</keyword>
<feature type="chain" id="PRO_0000112832" description="Auxin-responsive protein IAA1">
    <location>
        <begin position="1"/>
        <end position="168"/>
    </location>
</feature>
<feature type="domain" description="PB1" evidence="1">
    <location>
        <begin position="74"/>
        <end position="161"/>
    </location>
</feature>
<feature type="region of interest" description="Disordered" evidence="2">
    <location>
        <begin position="1"/>
        <end position="74"/>
    </location>
</feature>
<feature type="short sequence motif" description="EAR-like (transcriptional repression)">
    <location>
        <begin position="14"/>
        <end position="18"/>
    </location>
</feature>
<feature type="compositionally biased region" description="Polar residues" evidence="2">
    <location>
        <begin position="23"/>
        <end position="34"/>
    </location>
</feature>
<feature type="sequence conflict" description="In Ref. 1; AAA16569." evidence="7" ref="1">
    <original>A</original>
    <variation>T</variation>
    <location>
        <position position="52"/>
    </location>
</feature>
<organism>
    <name type="scientific">Arabidopsis thaliana</name>
    <name type="common">Mouse-ear cress</name>
    <dbReference type="NCBI Taxonomy" id="3702"/>
    <lineage>
        <taxon>Eukaryota</taxon>
        <taxon>Viridiplantae</taxon>
        <taxon>Streptophyta</taxon>
        <taxon>Embryophyta</taxon>
        <taxon>Tracheophyta</taxon>
        <taxon>Spermatophyta</taxon>
        <taxon>Magnoliopsida</taxon>
        <taxon>eudicotyledons</taxon>
        <taxon>Gunneridae</taxon>
        <taxon>Pentapetalae</taxon>
        <taxon>rosids</taxon>
        <taxon>malvids</taxon>
        <taxon>Brassicales</taxon>
        <taxon>Brassicaceae</taxon>
        <taxon>Camelineae</taxon>
        <taxon>Arabidopsis</taxon>
    </lineage>
</organism>
<comment type="function">
    <text evidence="4">Aux/IAA proteins are short-lived transcriptional factors that function as repressors of early auxin response genes at low auxin concentrations. Repression is thought to result from the interaction with auxin response factors (ARFs), proteins that bind to the auxin-responsive promoter element (AuxRE). Formation of heterodimers with ARF proteins may alter their ability to modulate early auxin response genes expression.</text>
</comment>
<comment type="subunit">
    <text evidence="5">Homodimers and heterodimers. Interacts with the auxin-responsive protein IAA2. Interacts with TPL.</text>
</comment>
<comment type="interaction">
    <interactant intactId="EBI-630505">
        <id>P49677</id>
    </interactant>
    <interactant intactId="EBI-529887">
        <id>Q8RYC8</id>
        <label>ARF19</label>
    </interactant>
    <organismsDiffer>false</organismsDiffer>
    <experiments>4</experiments>
</comment>
<comment type="interaction">
    <interactant intactId="EBI-630505">
        <id>P49677</id>
    </interactant>
    <interactant intactId="EBI-629519">
        <id>P93024</id>
        <label>ARF5</label>
    </interactant>
    <organismsDiffer>false</organismsDiffer>
    <experiments>4</experiments>
</comment>
<comment type="interaction">
    <interactant intactId="EBI-630505">
        <id>P49677</id>
    </interactant>
    <interactant intactId="EBI-632284">
        <id>P93022</id>
        <label>ARF7</label>
    </interactant>
    <organismsDiffer>false</organismsDiffer>
    <experiments>4</experiments>
</comment>
<comment type="interaction">
    <interactant intactId="EBI-630505">
        <id>P49677</id>
    </interactant>
    <interactant intactId="EBI-4447439">
        <id>O80533</id>
        <label>At1g09500</label>
    </interactant>
    <organismsDiffer>false</organismsDiffer>
    <experiments>3</experiments>
</comment>
<comment type="interaction">
    <interactant intactId="EBI-630505">
        <id>P49677</id>
    </interactant>
    <interactant intactId="EBI-630505">
        <id>P49677</id>
        <label>IAA1</label>
    </interactant>
    <organismsDiffer>false</organismsDiffer>
    <experiments>10</experiments>
</comment>
<comment type="interaction">
    <interactant intactId="EBI-630505">
        <id>P49677</id>
    </interactant>
    <interactant intactId="EBI-3946434">
        <id>Q38828</id>
        <label>IAA10</label>
    </interactant>
    <organismsDiffer>false</organismsDiffer>
    <experiments>10</experiments>
</comment>
<comment type="interaction">
    <interactant intactId="EBI-630505">
        <id>P49677</id>
    </interactant>
    <interactant intactId="EBI-2367923">
        <id>Q38829</id>
        <label>IAA11</label>
    </interactant>
    <organismsDiffer>false</organismsDiffer>
    <experiments>5</experiments>
</comment>
<comment type="interaction">
    <interactant intactId="EBI-630505">
        <id>P49677</id>
    </interactant>
    <interactant intactId="EBI-617608">
        <id>Q38830</id>
        <label>IAA12</label>
    </interactant>
    <organismsDiffer>false</organismsDiffer>
    <experiments>5</experiments>
</comment>
<comment type="interaction">
    <interactant intactId="EBI-630505">
        <id>P49677</id>
    </interactant>
    <interactant intactId="EBI-1554143">
        <id>Q38831</id>
        <label>IAA13</label>
    </interactant>
    <organismsDiffer>false</organismsDiffer>
    <experiments>8</experiments>
</comment>
<comment type="interaction">
    <interactant intactId="EBI-630505">
        <id>P49677</id>
    </interactant>
    <interactant intactId="EBI-2295562">
        <id>Q38832</id>
        <label>IAA14</label>
    </interactant>
    <organismsDiffer>false</organismsDiffer>
    <experiments>3</experiments>
</comment>
<comment type="interaction">
    <interactant intactId="EBI-630505">
        <id>P49677</id>
    </interactant>
    <interactant intactId="EBI-25524519">
        <id>A0A2H1ZEF6</id>
        <label>IAA15</label>
    </interactant>
    <organismsDiffer>false</organismsDiffer>
    <experiments>5</experiments>
</comment>
<comment type="interaction">
    <interactant intactId="EBI-630505">
        <id>P49677</id>
    </interactant>
    <interactant intactId="EBI-632231">
        <id>O24407</id>
        <label>IAA16</label>
    </interactant>
    <organismsDiffer>false</organismsDiffer>
    <experiments>11</experiments>
</comment>
<comment type="interaction">
    <interactant intactId="EBI-630505">
        <id>P49677</id>
    </interactant>
    <interactant intactId="EBI-632243">
        <id>P93830</id>
        <label>IAA17</label>
    </interactant>
    <organismsDiffer>false</organismsDiffer>
    <experiments>11</experiments>
</comment>
<comment type="interaction">
    <interactant intactId="EBI-630505">
        <id>P49677</id>
    </interactant>
    <interactant intactId="EBI-2295525">
        <id>O24408</id>
        <label>IAA18</label>
    </interactant>
    <organismsDiffer>false</organismsDiffer>
    <experiments>6</experiments>
</comment>
<comment type="interaction">
    <interactant intactId="EBI-630505">
        <id>P49677</id>
    </interactant>
    <interactant intactId="EBI-632257">
        <id>O24409</id>
        <label>IAA19</label>
    </interactant>
    <organismsDiffer>false</organismsDiffer>
    <experiments>12</experiments>
</comment>
<comment type="interaction">
    <interactant intactId="EBI-630505">
        <id>P49677</id>
    </interactant>
    <interactant intactId="EBI-632343">
        <id>P49678</id>
        <label>IAA2</label>
    </interactant>
    <organismsDiffer>false</organismsDiffer>
    <experiments>13</experiments>
</comment>
<comment type="interaction">
    <interactant intactId="EBI-630505">
        <id>P49677</id>
    </interactant>
    <interactant intactId="EBI-632272">
        <id>O24410</id>
        <label>IAA20</label>
    </interactant>
    <organismsDiffer>false</organismsDiffer>
    <experiments>6</experiments>
</comment>
<comment type="interaction">
    <interactant intactId="EBI-630505">
        <id>P49677</id>
    </interactant>
    <interactant intactId="EBI-3947418">
        <id>Q8LAL2</id>
        <label>IAA26</label>
    </interactant>
    <organismsDiffer>false</organismsDiffer>
    <experiments>14</experiments>
</comment>
<comment type="interaction">
    <interactant intactId="EBI-630505">
        <id>P49677</id>
    </interactant>
    <interactant intactId="EBI-3946677">
        <id>Q9ZSY8</id>
        <label>IAA27</label>
    </interactant>
    <organismsDiffer>false</organismsDiffer>
    <experiments>10</experiments>
</comment>
<comment type="interaction">
    <interactant intactId="EBI-630505">
        <id>P49677</id>
    </interactant>
    <interactant intactId="EBI-3133404">
        <id>Q9XFM0</id>
        <label>IAA28</label>
    </interactant>
    <organismsDiffer>false</organismsDiffer>
    <experiments>12</experiments>
</comment>
<comment type="interaction">
    <interactant intactId="EBI-630505">
        <id>P49677</id>
    </interactant>
    <interactant intactId="EBI-307174">
        <id>Q38822</id>
        <label>IAA3</label>
    </interactant>
    <organismsDiffer>false</organismsDiffer>
    <experiments>13</experiments>
</comment>
<comment type="interaction">
    <interactant intactId="EBI-630505">
        <id>P49677</id>
    </interactant>
    <interactant intactId="EBI-3946448">
        <id>Q8RYC6</id>
        <label>IAA32</label>
    </interactant>
    <organismsDiffer>false</organismsDiffer>
    <experiments>3</experiments>
</comment>
<comment type="interaction">
    <interactant intactId="EBI-630505">
        <id>P49677</id>
    </interactant>
    <interactant intactId="EBI-3946459">
        <id>Q9C5X0</id>
        <label>IAA34</label>
    </interactant>
    <organismsDiffer>false</organismsDiffer>
    <experiments>6</experiments>
</comment>
<comment type="interaction">
    <interactant intactId="EBI-630505">
        <id>P49677</id>
    </interactant>
    <interactant intactId="EBI-632187">
        <id>P33077</id>
        <label>IAA4</label>
    </interactant>
    <organismsDiffer>false</organismsDiffer>
    <experiments>10</experiments>
</comment>
<comment type="interaction">
    <interactant intactId="EBI-630505">
        <id>P49677</id>
    </interactant>
    <interactant intactId="EBI-3946487">
        <id>P33078</id>
        <label>IAA5</label>
    </interactant>
    <organismsDiffer>false</organismsDiffer>
    <experiments>6</experiments>
</comment>
<comment type="interaction">
    <interactant intactId="EBI-630505">
        <id>P49677</id>
    </interactant>
    <interactant intactId="EBI-1554124">
        <id>Q38824</id>
        <label>IAA6</label>
    </interactant>
    <organismsDiffer>false</organismsDiffer>
    <experiments>9</experiments>
</comment>
<comment type="interaction">
    <interactant intactId="EBI-630505">
        <id>P49677</id>
    </interactant>
    <interactant intactId="EBI-602959">
        <id>Q38825</id>
        <label>IAA7</label>
    </interactant>
    <organismsDiffer>false</organismsDiffer>
    <experiments>3</experiments>
</comment>
<comment type="interaction">
    <interactant intactId="EBI-630505">
        <id>P49677</id>
    </interactant>
    <interactant intactId="EBI-632200">
        <id>Q38826</id>
        <label>IAA8</label>
    </interactant>
    <organismsDiffer>false</organismsDiffer>
    <experiments>7</experiments>
</comment>
<comment type="interaction">
    <interactant intactId="EBI-630505">
        <id>P49677</id>
    </interactant>
    <interactant intactId="EBI-632216">
        <id>Q38827</id>
        <label>IAA9</label>
    </interactant>
    <organismsDiffer>false</organismsDiffer>
    <experiments>5</experiments>
</comment>
<comment type="interaction">
    <interactant intactId="EBI-630505">
        <id>P49677</id>
    </interactant>
    <interactant intactId="EBI-4453099">
        <id>Q9LV27</id>
        <label>LST8-1</label>
    </interactant>
    <organismsDiffer>false</organismsDiffer>
    <experiments>4</experiments>
</comment>
<comment type="interaction">
    <interactant intactId="EBI-630505">
        <id>P49677</id>
    </interactant>
    <interactant intactId="EBI-1238013">
        <id>O22179</id>
        <label>MYB70</label>
    </interactant>
    <organismsDiffer>false</organismsDiffer>
    <experiments>3</experiments>
</comment>
<comment type="interaction">
    <interactant intactId="EBI-630505">
        <id>P49677</id>
    </interactant>
    <interactant intactId="EBI-4426144">
        <id>Q9C9L2</id>
        <label>TCP15</label>
    </interactant>
    <organismsDiffer>false</organismsDiffer>
    <experiments>3</experiments>
</comment>
<comment type="interaction">
    <interactant intactId="EBI-630505">
        <id>P49677</id>
    </interactant>
    <interactant intactId="EBI-632357">
        <id>P49679</id>
        <label>IAA4/5</label>
    </interactant>
    <organismsDiffer>true</organismsDiffer>
    <experiments>3</experiments>
</comment>
<comment type="subcellular location">
    <subcellularLocation>
        <location>Nucleus</location>
    </subcellularLocation>
</comment>
<comment type="tissue specificity">
    <text evidence="6">Preferentially expressed in stems, leaves and flowers.</text>
</comment>
<comment type="induction">
    <text evidence="6">By auxin.</text>
</comment>
<comment type="domain">
    <text>The N-terminal half of the protein contains two conserved domains I and II. Domain I includes a slightly degenerated ERF-associated amphiphilic repression (EAR) motif which seems to be involved in the activity of transcriptional repression. Domain II is required for the correct degradation of the protein through the SCF-mediated ubiquitin-proteasome pathway. Interactions between Aux/IAA proteins and auxin response factors (ARFs) occur through their C-terminal dimerization domains III and IV.</text>
</comment>
<comment type="PTM">
    <text evidence="3">Phosphorylated by phytochrome A in vitro.</text>
</comment>
<comment type="similarity">
    <text evidence="7">Belongs to the Aux/IAA family.</text>
</comment>
<sequence>MEVTNGLNLKDTELRLGLPGAQEEQQLELSCVRSNNKRKNNDSTEESAPPPAKTQIVGWPPVRSNRKNNNNKNVSYVKVSMDGAPYLRKIDLKMYKNYPELLKALENMFKFTVGEYSEREGYKGSGFVPTYEDKDGDWMLVGDVPWDMFSSSCQKLRIMKGSEAPTAL</sequence>
<accession>P49677</accession>
<accession>O23312</accession>
<reference key="1">
    <citation type="journal article" date="1994" name="Proc. Natl. Acad. Sci. U.S.A.">
        <title>Early auxin-induced genes encode short-lived nuclear proteins.</title>
        <authorList>
            <person name="Abel S."/>
            <person name="Oeller P.W."/>
            <person name="Theologis A."/>
        </authorList>
    </citation>
    <scope>NUCLEOTIDE SEQUENCE [MRNA]</scope>
    <source>
        <strain>cv. Columbia</strain>
    </source>
</reference>
<reference key="2">
    <citation type="journal article" date="1998" name="Nature">
        <title>Analysis of 1.9 Mb of contiguous sequence from chromosome 4 of Arabidopsis thaliana.</title>
        <authorList>
            <person name="Bevan M."/>
            <person name="Bancroft I."/>
            <person name="Bent E."/>
            <person name="Love K."/>
            <person name="Goodman H.M."/>
            <person name="Dean C."/>
            <person name="Bergkamp R."/>
            <person name="Dirkse W."/>
            <person name="van Staveren M."/>
            <person name="Stiekema W."/>
            <person name="Drost L."/>
            <person name="Ridley P."/>
            <person name="Hudson S.-A."/>
            <person name="Patel K."/>
            <person name="Murphy G."/>
            <person name="Piffanelli P."/>
            <person name="Wedler H."/>
            <person name="Wedler E."/>
            <person name="Wambutt R."/>
            <person name="Weitzenegger T."/>
            <person name="Pohl T."/>
            <person name="Terryn N."/>
            <person name="Gielen J."/>
            <person name="Villarroel R."/>
            <person name="De Clercq R."/>
            <person name="van Montagu M."/>
            <person name="Lecharny A."/>
            <person name="Aubourg S."/>
            <person name="Gy I."/>
            <person name="Kreis M."/>
            <person name="Lao N."/>
            <person name="Kavanagh T."/>
            <person name="Hempel S."/>
            <person name="Kotter P."/>
            <person name="Entian K.-D."/>
            <person name="Rieger M."/>
            <person name="Schaefer M."/>
            <person name="Funk B."/>
            <person name="Mueller-Auer S."/>
            <person name="Silvey M."/>
            <person name="James R."/>
            <person name="Monfort A."/>
            <person name="Pons A."/>
            <person name="Puigdomenech P."/>
            <person name="Douka A."/>
            <person name="Voukelatou E."/>
            <person name="Milioni D."/>
            <person name="Hatzopoulos P."/>
            <person name="Piravandi E."/>
            <person name="Obermaier B."/>
            <person name="Hilbert H."/>
            <person name="Duesterhoeft A."/>
            <person name="Moores T."/>
            <person name="Jones J.D.G."/>
            <person name="Eneva T."/>
            <person name="Palme K."/>
            <person name="Benes V."/>
            <person name="Rechmann S."/>
            <person name="Ansorge W."/>
            <person name="Cooke R."/>
            <person name="Berger C."/>
            <person name="Delseny M."/>
            <person name="Voet M."/>
            <person name="Volckaert G."/>
            <person name="Mewes H.-W."/>
            <person name="Klosterman S."/>
            <person name="Schueller C."/>
            <person name="Chalwatzis N."/>
        </authorList>
    </citation>
    <scope>NUCLEOTIDE SEQUENCE [LARGE SCALE GENOMIC DNA]</scope>
    <source>
        <strain>cv. Columbia</strain>
    </source>
</reference>
<reference key="3">
    <citation type="journal article" date="1999" name="Nature">
        <title>Sequence and analysis of chromosome 4 of the plant Arabidopsis thaliana.</title>
        <authorList>
            <person name="Mayer K.F.X."/>
            <person name="Schueller C."/>
            <person name="Wambutt R."/>
            <person name="Murphy G."/>
            <person name="Volckaert G."/>
            <person name="Pohl T."/>
            <person name="Duesterhoeft A."/>
            <person name="Stiekema W."/>
            <person name="Entian K.-D."/>
            <person name="Terryn N."/>
            <person name="Harris B."/>
            <person name="Ansorge W."/>
            <person name="Brandt P."/>
            <person name="Grivell L.A."/>
            <person name="Rieger M."/>
            <person name="Weichselgartner M."/>
            <person name="de Simone V."/>
            <person name="Obermaier B."/>
            <person name="Mache R."/>
            <person name="Mueller M."/>
            <person name="Kreis M."/>
            <person name="Delseny M."/>
            <person name="Puigdomenech P."/>
            <person name="Watson M."/>
            <person name="Schmidtheini T."/>
            <person name="Reichert B."/>
            <person name="Portetelle D."/>
            <person name="Perez-Alonso M."/>
            <person name="Boutry M."/>
            <person name="Bancroft I."/>
            <person name="Vos P."/>
            <person name="Hoheisel J."/>
            <person name="Zimmermann W."/>
            <person name="Wedler H."/>
            <person name="Ridley P."/>
            <person name="Langham S.-A."/>
            <person name="McCullagh B."/>
            <person name="Bilham L."/>
            <person name="Robben J."/>
            <person name="van der Schueren J."/>
            <person name="Grymonprez B."/>
            <person name="Chuang Y.-J."/>
            <person name="Vandenbussche F."/>
            <person name="Braeken M."/>
            <person name="Weltjens I."/>
            <person name="Voet M."/>
            <person name="Bastiaens I."/>
            <person name="Aert R."/>
            <person name="Defoor E."/>
            <person name="Weitzenegger T."/>
            <person name="Bothe G."/>
            <person name="Ramsperger U."/>
            <person name="Hilbert H."/>
            <person name="Braun M."/>
            <person name="Holzer E."/>
            <person name="Brandt A."/>
            <person name="Peters S."/>
            <person name="van Staveren M."/>
            <person name="Dirkse W."/>
            <person name="Mooijman P."/>
            <person name="Klein Lankhorst R."/>
            <person name="Rose M."/>
            <person name="Hauf J."/>
            <person name="Koetter P."/>
            <person name="Berneiser S."/>
            <person name="Hempel S."/>
            <person name="Feldpausch M."/>
            <person name="Lamberth S."/>
            <person name="Van den Daele H."/>
            <person name="De Keyser A."/>
            <person name="Buysshaert C."/>
            <person name="Gielen J."/>
            <person name="Villarroel R."/>
            <person name="De Clercq R."/>
            <person name="van Montagu M."/>
            <person name="Rogers J."/>
            <person name="Cronin A."/>
            <person name="Quail M.A."/>
            <person name="Bray-Allen S."/>
            <person name="Clark L."/>
            <person name="Doggett J."/>
            <person name="Hall S."/>
            <person name="Kay M."/>
            <person name="Lennard N."/>
            <person name="McLay K."/>
            <person name="Mayes R."/>
            <person name="Pettett A."/>
            <person name="Rajandream M.A."/>
            <person name="Lyne M."/>
            <person name="Benes V."/>
            <person name="Rechmann S."/>
            <person name="Borkova D."/>
            <person name="Bloecker H."/>
            <person name="Scharfe M."/>
            <person name="Grimm M."/>
            <person name="Loehnert T.-H."/>
            <person name="Dose S."/>
            <person name="de Haan M."/>
            <person name="Maarse A.C."/>
            <person name="Schaefer M."/>
            <person name="Mueller-Auer S."/>
            <person name="Gabel C."/>
            <person name="Fuchs M."/>
            <person name="Fartmann B."/>
            <person name="Granderath K."/>
            <person name="Dauner D."/>
            <person name="Herzl A."/>
            <person name="Neumann S."/>
            <person name="Argiriou A."/>
            <person name="Vitale D."/>
            <person name="Liguori R."/>
            <person name="Piravandi E."/>
            <person name="Massenet O."/>
            <person name="Quigley F."/>
            <person name="Clabauld G."/>
            <person name="Muendlein A."/>
            <person name="Felber R."/>
            <person name="Schnabl S."/>
            <person name="Hiller R."/>
            <person name="Schmidt W."/>
            <person name="Lecharny A."/>
            <person name="Aubourg S."/>
            <person name="Chefdor F."/>
            <person name="Cooke R."/>
            <person name="Berger C."/>
            <person name="Monfort A."/>
            <person name="Casacuberta E."/>
            <person name="Gibbons T."/>
            <person name="Weber N."/>
            <person name="Vandenbol M."/>
            <person name="Bargues M."/>
            <person name="Terol J."/>
            <person name="Torres A."/>
            <person name="Perez-Perez A."/>
            <person name="Purnelle B."/>
            <person name="Bent E."/>
            <person name="Johnson S."/>
            <person name="Tacon D."/>
            <person name="Jesse T."/>
            <person name="Heijnen L."/>
            <person name="Schwarz S."/>
            <person name="Scholler P."/>
            <person name="Heber S."/>
            <person name="Francs P."/>
            <person name="Bielke C."/>
            <person name="Frishman D."/>
            <person name="Haase D."/>
            <person name="Lemcke K."/>
            <person name="Mewes H.-W."/>
            <person name="Stocker S."/>
            <person name="Zaccaria P."/>
            <person name="Bevan M."/>
            <person name="Wilson R.K."/>
            <person name="de la Bastide M."/>
            <person name="Habermann K."/>
            <person name="Parnell L."/>
            <person name="Dedhia N."/>
            <person name="Gnoj L."/>
            <person name="Schutz K."/>
            <person name="Huang E."/>
            <person name="Spiegel L."/>
            <person name="Sekhon M."/>
            <person name="Murray J."/>
            <person name="Sheet P."/>
            <person name="Cordes M."/>
            <person name="Abu-Threideh J."/>
            <person name="Stoneking T."/>
            <person name="Kalicki J."/>
            <person name="Graves T."/>
            <person name="Harmon G."/>
            <person name="Edwards J."/>
            <person name="Latreille P."/>
            <person name="Courtney L."/>
            <person name="Cloud J."/>
            <person name="Abbott A."/>
            <person name="Scott K."/>
            <person name="Johnson D."/>
            <person name="Minx P."/>
            <person name="Bentley D."/>
            <person name="Fulton B."/>
            <person name="Miller N."/>
            <person name="Greco T."/>
            <person name="Kemp K."/>
            <person name="Kramer J."/>
            <person name="Fulton L."/>
            <person name="Mardis E."/>
            <person name="Dante M."/>
            <person name="Pepin K."/>
            <person name="Hillier L.W."/>
            <person name="Nelson J."/>
            <person name="Spieth J."/>
            <person name="Ryan E."/>
            <person name="Andrews S."/>
            <person name="Geisel C."/>
            <person name="Layman D."/>
            <person name="Du H."/>
            <person name="Ali J."/>
            <person name="Berghoff A."/>
            <person name="Jones K."/>
            <person name="Drone K."/>
            <person name="Cotton M."/>
            <person name="Joshu C."/>
            <person name="Antonoiu B."/>
            <person name="Zidanic M."/>
            <person name="Strong C."/>
            <person name="Sun H."/>
            <person name="Lamar B."/>
            <person name="Yordan C."/>
            <person name="Ma P."/>
            <person name="Zhong J."/>
            <person name="Preston R."/>
            <person name="Vil D."/>
            <person name="Shekher M."/>
            <person name="Matero A."/>
            <person name="Shah R."/>
            <person name="Swaby I.K."/>
            <person name="O'Shaughnessy A."/>
            <person name="Rodriguez M."/>
            <person name="Hoffman J."/>
            <person name="Till S."/>
            <person name="Granat S."/>
            <person name="Shohdy N."/>
            <person name="Hasegawa A."/>
            <person name="Hameed A."/>
            <person name="Lodhi M."/>
            <person name="Johnson A."/>
            <person name="Chen E."/>
            <person name="Marra M.A."/>
            <person name="Martienssen R."/>
            <person name="McCombie W.R."/>
        </authorList>
    </citation>
    <scope>NUCLEOTIDE SEQUENCE [LARGE SCALE GENOMIC DNA]</scope>
    <source>
        <strain>cv. Columbia</strain>
    </source>
</reference>
<reference key="4">
    <citation type="journal article" date="2017" name="Plant J.">
        <title>Araport11: a complete reannotation of the Arabidopsis thaliana reference genome.</title>
        <authorList>
            <person name="Cheng C.Y."/>
            <person name="Krishnakumar V."/>
            <person name="Chan A.P."/>
            <person name="Thibaud-Nissen F."/>
            <person name="Schobel S."/>
            <person name="Town C.D."/>
        </authorList>
    </citation>
    <scope>GENOME REANNOTATION</scope>
    <source>
        <strain>cv. Columbia</strain>
    </source>
</reference>
<reference key="5">
    <citation type="journal article" date="2003" name="Science">
        <title>Empirical analysis of transcriptional activity in the Arabidopsis genome.</title>
        <authorList>
            <person name="Yamada K."/>
            <person name="Lim J."/>
            <person name="Dale J.M."/>
            <person name="Chen H."/>
            <person name="Shinn P."/>
            <person name="Palm C.J."/>
            <person name="Southwick A.M."/>
            <person name="Wu H.C."/>
            <person name="Kim C.J."/>
            <person name="Nguyen M."/>
            <person name="Pham P.K."/>
            <person name="Cheuk R.F."/>
            <person name="Karlin-Newmann G."/>
            <person name="Liu S.X."/>
            <person name="Lam B."/>
            <person name="Sakano H."/>
            <person name="Wu T."/>
            <person name="Yu G."/>
            <person name="Miranda M."/>
            <person name="Quach H.L."/>
            <person name="Tripp M."/>
            <person name="Chang C.H."/>
            <person name="Lee J.M."/>
            <person name="Toriumi M.J."/>
            <person name="Chan M.M."/>
            <person name="Tang C.C."/>
            <person name="Onodera C.S."/>
            <person name="Deng J.M."/>
            <person name="Akiyama K."/>
            <person name="Ansari Y."/>
            <person name="Arakawa T."/>
            <person name="Banh J."/>
            <person name="Banno F."/>
            <person name="Bowser L."/>
            <person name="Brooks S.Y."/>
            <person name="Carninci P."/>
            <person name="Chao Q."/>
            <person name="Choy N."/>
            <person name="Enju A."/>
            <person name="Goldsmith A.D."/>
            <person name="Gurjal M."/>
            <person name="Hansen N.F."/>
            <person name="Hayashizaki Y."/>
            <person name="Johnson-Hopson C."/>
            <person name="Hsuan V.W."/>
            <person name="Iida K."/>
            <person name="Karnes M."/>
            <person name="Khan S."/>
            <person name="Koesema E."/>
            <person name="Ishida J."/>
            <person name="Jiang P.X."/>
            <person name="Jones T."/>
            <person name="Kawai J."/>
            <person name="Kamiya A."/>
            <person name="Meyers C."/>
            <person name="Nakajima M."/>
            <person name="Narusaka M."/>
            <person name="Seki M."/>
            <person name="Sakurai T."/>
            <person name="Satou M."/>
            <person name="Tamse R."/>
            <person name="Vaysberg M."/>
            <person name="Wallender E.K."/>
            <person name="Wong C."/>
            <person name="Yamamura Y."/>
            <person name="Yuan S."/>
            <person name="Shinozaki K."/>
            <person name="Davis R.W."/>
            <person name="Theologis A."/>
            <person name="Ecker J.R."/>
        </authorList>
    </citation>
    <scope>NUCLEOTIDE SEQUENCE [LARGE SCALE MRNA]</scope>
    <source>
        <strain>cv. Columbia</strain>
    </source>
</reference>
<reference key="6">
    <citation type="journal article" date="1995" name="J. Mol. Biol.">
        <title>The PS-IAA4/5-like family of early auxin-inducible mRNAs in Arabidopsis thaliana.</title>
        <authorList>
            <person name="Abel S."/>
            <person name="Nguyen M.D."/>
            <person name="Theologis A."/>
        </authorList>
    </citation>
    <scope>TISSUE SPECIFICITY</scope>
    <scope>INDUCTION</scope>
</reference>
<reference key="7">
    <citation type="journal article" date="1997" name="Proc. Natl. Acad. Sci. U.S.A.">
        <title>Protein-protein interactions among the Aux/IAA proteins.</title>
        <authorList>
            <person name="Kim J."/>
            <person name="Harter K."/>
            <person name="Theologis A."/>
        </authorList>
    </citation>
    <scope>DIMERIZATION</scope>
</reference>
<reference key="8">
    <citation type="journal article" date="2000" name="Plant Physiol.">
        <title>Aux/IAA proteins are phosphorylated by phytochrome in vitro.</title>
        <authorList>
            <person name="Colon-Carmona A."/>
            <person name="Chen D.L."/>
            <person name="Yeh K.-C."/>
            <person name="Abel S."/>
        </authorList>
    </citation>
    <scope>PHOSPHORYLATION BY PHYTOCHROME A</scope>
</reference>
<reference key="9">
    <citation type="journal article" date="2002" name="Plant Mol. Biol.">
        <title>Genetics of Aux/IAA and ARF action in plant growth and development.</title>
        <authorList>
            <person name="Liscum E."/>
            <person name="Reed J.W."/>
        </authorList>
    </citation>
    <scope>GENE FAMILY</scope>
    <scope>NOMENCLATURE</scope>
    <scope>FUNCTION</scope>
</reference>
<reference key="10">
    <citation type="journal article" date="2004" name="Plant Cell">
        <title>Aux/IAA proteins contain a potent transcriptional repression domain.</title>
        <authorList>
            <person name="Tiwari S.B."/>
            <person name="Hagen G."/>
            <person name="Guilfoyle T.J."/>
        </authorList>
    </citation>
    <scope>TRANSCRIPTIONAL REPRESSION DOMAIN</scope>
</reference>
<reference key="11">
    <citation type="journal article" date="2008" name="Science">
        <title>TOPLESS mediates auxin-dependent transcriptional repression during Arabidopsis embryogenesis.</title>
        <authorList>
            <person name="Szemenyei H."/>
            <person name="Hannon M."/>
            <person name="Long J.A."/>
        </authorList>
    </citation>
    <scope>INTERACTION WITH TPL</scope>
</reference>
<protein>
    <recommendedName>
        <fullName>Auxin-responsive protein IAA1</fullName>
    </recommendedName>
    <alternativeName>
        <fullName>Indoleacetic acid-induced protein 1</fullName>
    </alternativeName>
</protein>